<name>SECB_HAEIN</name>
<accession>P44853</accession>
<reference key="1">
    <citation type="journal article" date="1995" name="Science">
        <title>Whole-genome random sequencing and assembly of Haemophilus influenzae Rd.</title>
        <authorList>
            <person name="Fleischmann R.D."/>
            <person name="Adams M.D."/>
            <person name="White O."/>
            <person name="Clayton R.A."/>
            <person name="Kirkness E.F."/>
            <person name="Kerlavage A.R."/>
            <person name="Bult C.J."/>
            <person name="Tomb J.-F."/>
            <person name="Dougherty B.A."/>
            <person name="Merrick J.M."/>
            <person name="McKenney K."/>
            <person name="Sutton G.G."/>
            <person name="FitzHugh W."/>
            <person name="Fields C.A."/>
            <person name="Gocayne J.D."/>
            <person name="Scott J.D."/>
            <person name="Shirley R."/>
            <person name="Liu L.-I."/>
            <person name="Glodek A."/>
            <person name="Kelley J.M."/>
            <person name="Weidman J.F."/>
            <person name="Phillips C.A."/>
            <person name="Spriggs T."/>
            <person name="Hedblom E."/>
            <person name="Cotton M.D."/>
            <person name="Utterback T.R."/>
            <person name="Hanna M.C."/>
            <person name="Nguyen D.T."/>
            <person name="Saudek D.M."/>
            <person name="Brandon R.C."/>
            <person name="Fine L.D."/>
            <person name="Fritchman J.L."/>
            <person name="Fuhrmann J.L."/>
            <person name="Geoghagen N.S.M."/>
            <person name="Gnehm C.L."/>
            <person name="McDonald L.A."/>
            <person name="Small K.V."/>
            <person name="Fraser C.M."/>
            <person name="Smith H.O."/>
            <person name="Venter J.C."/>
        </authorList>
    </citation>
    <scope>NUCLEOTIDE SEQUENCE [LARGE SCALE GENOMIC DNA]</scope>
    <source>
        <strain>ATCC 51907 / DSM 11121 / KW20 / Rd</strain>
    </source>
</reference>
<reference key="2">
    <citation type="journal article" date="2000" name="Nat. Struct. Biol.">
        <title>Crystal structure of the bacterial protein export chaperone secB.</title>
        <authorList>
            <person name="Xu Z."/>
            <person name="Knafels J.D."/>
            <person name="Yoshino K."/>
        </authorList>
    </citation>
    <scope>X-RAY CRYSTALLOGRAPHY (2.5 ANGSTROMS)</scope>
</reference>
<evidence type="ECO:0000305" key="1"/>
<evidence type="ECO:0007829" key="2">
    <source>
        <dbReference type="PDB" id="1FX3"/>
    </source>
</evidence>
<comment type="function">
    <text>One of the proteins required for the normal export of preproteins out of the cell cytoplasm. It is a molecular chaperone that binds to a subset of precursor proteins, maintaining them in a translocation-competent state. It also specifically binds to its receptor SecA.</text>
</comment>
<comment type="subunit">
    <text>Homotetramer, a dimer of dimers. One homotetramer interacts with 1 SecA dimer.</text>
</comment>
<comment type="subcellular location">
    <subcellularLocation>
        <location>Cytoplasm</location>
    </subcellularLocation>
</comment>
<comment type="similarity">
    <text evidence="1">Belongs to the SecB family.</text>
</comment>
<protein>
    <recommendedName>
        <fullName>Protein-export protein SecB</fullName>
    </recommendedName>
</protein>
<proteinExistence type="evidence at protein level"/>
<organism>
    <name type="scientific">Haemophilus influenzae (strain ATCC 51907 / DSM 11121 / KW20 / Rd)</name>
    <dbReference type="NCBI Taxonomy" id="71421"/>
    <lineage>
        <taxon>Bacteria</taxon>
        <taxon>Pseudomonadati</taxon>
        <taxon>Pseudomonadota</taxon>
        <taxon>Gammaproteobacteria</taxon>
        <taxon>Pasteurellales</taxon>
        <taxon>Pasteurellaceae</taxon>
        <taxon>Haemophilus</taxon>
    </lineage>
</organism>
<gene>
    <name type="primary">secB</name>
    <name type="ordered locus">HI_0743</name>
</gene>
<keyword id="KW-0002">3D-structure</keyword>
<keyword id="KW-0143">Chaperone</keyword>
<keyword id="KW-0963">Cytoplasm</keyword>
<keyword id="KW-0653">Protein transport</keyword>
<keyword id="KW-1185">Reference proteome</keyword>
<keyword id="KW-0811">Translocation</keyword>
<keyword id="KW-0813">Transport</keyword>
<sequence length="169" mass="19132">MSEQKQDVAATEEQQPVLQIQRIYVKDVSFEAPNLPHIFQQEWKPKLGFDLSTETTQVGDDLYEVVLNISVETTLEDSGDVAFICEVKQAGVFTISGLEDVQMAHCLTSQCPNMLFPYARELVSNLVNRGTFPALNLSPVNFDALFVEYMNRQQAENAEEKSEEEQTKH</sequence>
<dbReference type="EMBL" id="L42023">
    <property type="protein sequence ID" value="AAC22401.1"/>
    <property type="molecule type" value="Genomic_DNA"/>
</dbReference>
<dbReference type="PIR" id="I64089">
    <property type="entry name" value="I64089"/>
</dbReference>
<dbReference type="RefSeq" id="NP_438902.1">
    <property type="nucleotide sequence ID" value="NC_000907.1"/>
</dbReference>
<dbReference type="PDB" id="1FX3">
    <property type="method" value="X-ray"/>
    <property type="resolution" value="2.50 A"/>
    <property type="chains" value="A/B/C/D=1-169"/>
</dbReference>
<dbReference type="PDB" id="1OZB">
    <property type="method" value="X-ray"/>
    <property type="resolution" value="2.80 A"/>
    <property type="chains" value="A/B/C/D/E/F/G/H=1-169"/>
</dbReference>
<dbReference type="PDBsum" id="1FX3"/>
<dbReference type="PDBsum" id="1OZB"/>
<dbReference type="SMR" id="P44853"/>
<dbReference type="IntAct" id="P44853">
    <property type="interactions" value="1"/>
</dbReference>
<dbReference type="STRING" id="71421.HI_0743"/>
<dbReference type="EnsemblBacteria" id="AAC22401">
    <property type="protein sequence ID" value="AAC22401"/>
    <property type="gene ID" value="HI_0743"/>
</dbReference>
<dbReference type="KEGG" id="hin:HI_0743"/>
<dbReference type="PATRIC" id="fig|71421.8.peg.779"/>
<dbReference type="eggNOG" id="COG1952">
    <property type="taxonomic scope" value="Bacteria"/>
</dbReference>
<dbReference type="HOGENOM" id="CLU_111574_1_0_6"/>
<dbReference type="OrthoDB" id="9795145at2"/>
<dbReference type="PhylomeDB" id="P44853"/>
<dbReference type="BioCyc" id="HINF71421:G1GJ1-781-MONOMER"/>
<dbReference type="EvolutionaryTrace" id="P44853"/>
<dbReference type="Proteomes" id="UP000000579">
    <property type="component" value="Chromosome"/>
</dbReference>
<dbReference type="GO" id="GO:0005737">
    <property type="term" value="C:cytoplasm"/>
    <property type="evidence" value="ECO:0007669"/>
    <property type="project" value="UniProtKB-SubCell"/>
</dbReference>
<dbReference type="GO" id="GO:0051082">
    <property type="term" value="F:unfolded protein binding"/>
    <property type="evidence" value="ECO:0007669"/>
    <property type="project" value="InterPro"/>
</dbReference>
<dbReference type="GO" id="GO:0006457">
    <property type="term" value="P:protein folding"/>
    <property type="evidence" value="ECO:0007669"/>
    <property type="project" value="UniProtKB-UniRule"/>
</dbReference>
<dbReference type="GO" id="GO:0051262">
    <property type="term" value="P:protein tetramerization"/>
    <property type="evidence" value="ECO:0007669"/>
    <property type="project" value="InterPro"/>
</dbReference>
<dbReference type="GO" id="GO:0015031">
    <property type="term" value="P:protein transport"/>
    <property type="evidence" value="ECO:0007669"/>
    <property type="project" value="UniProtKB-UniRule"/>
</dbReference>
<dbReference type="CDD" id="cd00557">
    <property type="entry name" value="Translocase_SecB"/>
    <property type="match status" value="1"/>
</dbReference>
<dbReference type="Gene3D" id="3.10.420.10">
    <property type="entry name" value="SecB-like"/>
    <property type="match status" value="1"/>
</dbReference>
<dbReference type="HAMAP" id="MF_00821">
    <property type="entry name" value="SecB"/>
    <property type="match status" value="1"/>
</dbReference>
<dbReference type="InterPro" id="IPR003708">
    <property type="entry name" value="SecB"/>
</dbReference>
<dbReference type="InterPro" id="IPR035958">
    <property type="entry name" value="SecB-like_sf"/>
</dbReference>
<dbReference type="NCBIfam" id="NF004393">
    <property type="entry name" value="PRK05751.1-4"/>
    <property type="match status" value="1"/>
</dbReference>
<dbReference type="NCBIfam" id="TIGR00809">
    <property type="entry name" value="secB"/>
    <property type="match status" value="1"/>
</dbReference>
<dbReference type="PANTHER" id="PTHR36918">
    <property type="match status" value="1"/>
</dbReference>
<dbReference type="PANTHER" id="PTHR36918:SF1">
    <property type="entry name" value="PROTEIN-EXPORT PROTEIN SECB"/>
    <property type="match status" value="1"/>
</dbReference>
<dbReference type="Pfam" id="PF02556">
    <property type="entry name" value="SecB"/>
    <property type="match status" value="1"/>
</dbReference>
<dbReference type="PRINTS" id="PR01594">
    <property type="entry name" value="SECBCHAPRONE"/>
</dbReference>
<dbReference type="SUPFAM" id="SSF54611">
    <property type="entry name" value="SecB-like"/>
    <property type="match status" value="1"/>
</dbReference>
<feature type="chain" id="PRO_0000055378" description="Protein-export protein SecB">
    <location>
        <begin position="1"/>
        <end position="169"/>
    </location>
</feature>
<feature type="strand" evidence="2">
    <location>
        <begin position="17"/>
        <end position="31"/>
    </location>
</feature>
<feature type="helix" evidence="2">
    <location>
        <begin position="35"/>
        <end position="38"/>
    </location>
</feature>
<feature type="strand" evidence="2">
    <location>
        <begin position="51"/>
        <end position="59"/>
    </location>
</feature>
<feature type="strand" evidence="2">
    <location>
        <begin position="62"/>
        <end position="71"/>
    </location>
</feature>
<feature type="turn" evidence="2">
    <location>
        <begin position="76"/>
        <end position="78"/>
    </location>
</feature>
<feature type="strand" evidence="2">
    <location>
        <begin position="84"/>
        <end position="97"/>
    </location>
</feature>
<feature type="helix" evidence="2">
    <location>
        <begin position="100"/>
        <end position="108"/>
    </location>
</feature>
<feature type="helix" evidence="2">
    <location>
        <begin position="110"/>
        <end position="129"/>
    </location>
</feature>
<feature type="helix" evidence="2">
    <location>
        <begin position="142"/>
        <end position="156"/>
    </location>
</feature>
<feature type="helix" evidence="2">
    <location>
        <begin position="158"/>
        <end position="161"/>
    </location>
</feature>